<reference key="1">
    <citation type="journal article" date="2006" name="Proc. Natl. Acad. Sci. U.S.A.">
        <title>The complete genome of Rhodococcus sp. RHA1 provides insights into a catabolic powerhouse.</title>
        <authorList>
            <person name="McLeod M.P."/>
            <person name="Warren R.L."/>
            <person name="Hsiao W.W.L."/>
            <person name="Araki N."/>
            <person name="Myhre M."/>
            <person name="Fernandes C."/>
            <person name="Miyazawa D."/>
            <person name="Wong W."/>
            <person name="Lillquist A.L."/>
            <person name="Wang D."/>
            <person name="Dosanjh M."/>
            <person name="Hara H."/>
            <person name="Petrescu A."/>
            <person name="Morin R.D."/>
            <person name="Yang G."/>
            <person name="Stott J.M."/>
            <person name="Schein J.E."/>
            <person name="Shin H."/>
            <person name="Smailus D."/>
            <person name="Siddiqui A.S."/>
            <person name="Marra M.A."/>
            <person name="Jones S.J.M."/>
            <person name="Holt R."/>
            <person name="Brinkman F.S.L."/>
            <person name="Miyauchi K."/>
            <person name="Fukuda M."/>
            <person name="Davies J.E."/>
            <person name="Mohn W.W."/>
            <person name="Eltis L.D."/>
        </authorList>
    </citation>
    <scope>NUCLEOTIDE SEQUENCE [LARGE SCALE GENOMIC DNA]</scope>
    <source>
        <strain>RHA1</strain>
    </source>
</reference>
<proteinExistence type="inferred from homology"/>
<name>PROB_RHOJR</name>
<gene>
    <name evidence="1" type="primary">proB</name>
    <name type="ordered locus">RHA1_ro01310</name>
</gene>
<accession>Q0SH52</accession>
<comment type="function">
    <text evidence="1">Catalyzes the transfer of a phosphate group to glutamate to form L-glutamate 5-phosphate.</text>
</comment>
<comment type="catalytic activity">
    <reaction evidence="1">
        <text>L-glutamate + ATP = L-glutamyl 5-phosphate + ADP</text>
        <dbReference type="Rhea" id="RHEA:14877"/>
        <dbReference type="ChEBI" id="CHEBI:29985"/>
        <dbReference type="ChEBI" id="CHEBI:30616"/>
        <dbReference type="ChEBI" id="CHEBI:58274"/>
        <dbReference type="ChEBI" id="CHEBI:456216"/>
        <dbReference type="EC" id="2.7.2.11"/>
    </reaction>
</comment>
<comment type="pathway">
    <text evidence="1">Amino-acid biosynthesis; L-proline biosynthesis; L-glutamate 5-semialdehyde from L-glutamate: step 1/2.</text>
</comment>
<comment type="subcellular location">
    <subcellularLocation>
        <location evidence="1">Cytoplasm</location>
    </subcellularLocation>
</comment>
<comment type="similarity">
    <text evidence="1">Belongs to the glutamate 5-kinase family.</text>
</comment>
<dbReference type="EC" id="2.7.2.11" evidence="1"/>
<dbReference type="EMBL" id="CP000431">
    <property type="protein sequence ID" value="ABG93134.1"/>
    <property type="molecule type" value="Genomic_DNA"/>
</dbReference>
<dbReference type="RefSeq" id="WP_011594373.1">
    <property type="nucleotide sequence ID" value="NC_008268.1"/>
</dbReference>
<dbReference type="SMR" id="Q0SH52"/>
<dbReference type="KEGG" id="rha:RHA1_ro01310"/>
<dbReference type="PATRIC" id="fig|101510.16.peg.1337"/>
<dbReference type="eggNOG" id="COG0263">
    <property type="taxonomic scope" value="Bacteria"/>
</dbReference>
<dbReference type="HOGENOM" id="CLU_025400_2_0_11"/>
<dbReference type="OrthoDB" id="9804434at2"/>
<dbReference type="UniPathway" id="UPA00098">
    <property type="reaction ID" value="UER00359"/>
</dbReference>
<dbReference type="Proteomes" id="UP000008710">
    <property type="component" value="Chromosome"/>
</dbReference>
<dbReference type="GO" id="GO:0005829">
    <property type="term" value="C:cytosol"/>
    <property type="evidence" value="ECO:0007669"/>
    <property type="project" value="TreeGrafter"/>
</dbReference>
<dbReference type="GO" id="GO:0005524">
    <property type="term" value="F:ATP binding"/>
    <property type="evidence" value="ECO:0007669"/>
    <property type="project" value="UniProtKB-KW"/>
</dbReference>
<dbReference type="GO" id="GO:0004349">
    <property type="term" value="F:glutamate 5-kinase activity"/>
    <property type="evidence" value="ECO:0007669"/>
    <property type="project" value="UniProtKB-UniRule"/>
</dbReference>
<dbReference type="GO" id="GO:0003723">
    <property type="term" value="F:RNA binding"/>
    <property type="evidence" value="ECO:0007669"/>
    <property type="project" value="InterPro"/>
</dbReference>
<dbReference type="GO" id="GO:0055129">
    <property type="term" value="P:L-proline biosynthetic process"/>
    <property type="evidence" value="ECO:0007669"/>
    <property type="project" value="UniProtKB-UniRule"/>
</dbReference>
<dbReference type="CDD" id="cd21157">
    <property type="entry name" value="PUA_G5K"/>
    <property type="match status" value="1"/>
</dbReference>
<dbReference type="FunFam" id="3.40.1160.10:FF:000018">
    <property type="entry name" value="Glutamate 5-kinase"/>
    <property type="match status" value="1"/>
</dbReference>
<dbReference type="Gene3D" id="3.40.1160.10">
    <property type="entry name" value="Acetylglutamate kinase-like"/>
    <property type="match status" value="1"/>
</dbReference>
<dbReference type="Gene3D" id="2.30.130.10">
    <property type="entry name" value="PUA domain"/>
    <property type="match status" value="1"/>
</dbReference>
<dbReference type="HAMAP" id="MF_00456">
    <property type="entry name" value="ProB"/>
    <property type="match status" value="1"/>
</dbReference>
<dbReference type="InterPro" id="IPR036393">
    <property type="entry name" value="AceGlu_kinase-like_sf"/>
</dbReference>
<dbReference type="InterPro" id="IPR001048">
    <property type="entry name" value="Asp/Glu/Uridylate_kinase"/>
</dbReference>
<dbReference type="InterPro" id="IPR001057">
    <property type="entry name" value="Glu/AcGlu_kinase"/>
</dbReference>
<dbReference type="InterPro" id="IPR011529">
    <property type="entry name" value="Glu_5kinase"/>
</dbReference>
<dbReference type="InterPro" id="IPR005715">
    <property type="entry name" value="Glu_5kinase/COase_Synthase"/>
</dbReference>
<dbReference type="InterPro" id="IPR019797">
    <property type="entry name" value="Glutamate_5-kinase_CS"/>
</dbReference>
<dbReference type="InterPro" id="IPR002478">
    <property type="entry name" value="PUA"/>
</dbReference>
<dbReference type="InterPro" id="IPR015947">
    <property type="entry name" value="PUA-like_sf"/>
</dbReference>
<dbReference type="InterPro" id="IPR036974">
    <property type="entry name" value="PUA_sf"/>
</dbReference>
<dbReference type="NCBIfam" id="TIGR01027">
    <property type="entry name" value="proB"/>
    <property type="match status" value="1"/>
</dbReference>
<dbReference type="PANTHER" id="PTHR43654">
    <property type="entry name" value="GLUTAMATE 5-KINASE"/>
    <property type="match status" value="1"/>
</dbReference>
<dbReference type="PANTHER" id="PTHR43654:SF1">
    <property type="entry name" value="ISOPENTENYL PHOSPHATE KINASE"/>
    <property type="match status" value="1"/>
</dbReference>
<dbReference type="Pfam" id="PF00696">
    <property type="entry name" value="AA_kinase"/>
    <property type="match status" value="1"/>
</dbReference>
<dbReference type="Pfam" id="PF01472">
    <property type="entry name" value="PUA"/>
    <property type="match status" value="1"/>
</dbReference>
<dbReference type="PIRSF" id="PIRSF000729">
    <property type="entry name" value="GK"/>
    <property type="match status" value="1"/>
</dbReference>
<dbReference type="PRINTS" id="PR00474">
    <property type="entry name" value="GLU5KINASE"/>
</dbReference>
<dbReference type="SMART" id="SM00359">
    <property type="entry name" value="PUA"/>
    <property type="match status" value="1"/>
</dbReference>
<dbReference type="SUPFAM" id="SSF53633">
    <property type="entry name" value="Carbamate kinase-like"/>
    <property type="match status" value="1"/>
</dbReference>
<dbReference type="SUPFAM" id="SSF88697">
    <property type="entry name" value="PUA domain-like"/>
    <property type="match status" value="1"/>
</dbReference>
<dbReference type="PROSITE" id="PS00902">
    <property type="entry name" value="GLUTAMATE_5_KINASE"/>
    <property type="match status" value="1"/>
</dbReference>
<dbReference type="PROSITE" id="PS50890">
    <property type="entry name" value="PUA"/>
    <property type="match status" value="1"/>
</dbReference>
<organism>
    <name type="scientific">Rhodococcus jostii (strain RHA1)</name>
    <dbReference type="NCBI Taxonomy" id="101510"/>
    <lineage>
        <taxon>Bacteria</taxon>
        <taxon>Bacillati</taxon>
        <taxon>Actinomycetota</taxon>
        <taxon>Actinomycetes</taxon>
        <taxon>Mycobacteriales</taxon>
        <taxon>Nocardiaceae</taxon>
        <taxon>Rhodococcus</taxon>
    </lineage>
</organism>
<sequence>MSATRRTIASAGSIVVKIGSSALTSLVGGLDVGRLDALADAIEDRMRAGSDVVVVSSGAVGAGLAPLGLTKRPRDLATKQAAASVGQLALAHAWGTSFARYGRTVGQVLLTADDIARRAQHRNAQRTLDRLRALHAVAIVNENDTVATAELRFGDNDRLAALVAHLVGADALVLLSDVDGLYDGDPRKGNATLIPEVNSPEDLDGVVAGSGGALGTGGMASKLSAARLAADAGVPVLLAAASDAGAALRDAGVGTAFVARPSRLSARKFWVRHAADEQGILHIDEGAVRAVVTKRRSLLPAGISAVSGRFYGGDVVSLLGPDERPVARGVVAYDSAEISDILGKSTQELPAEMQRPVVHADDLVPL</sequence>
<keyword id="KW-0028">Amino-acid biosynthesis</keyword>
<keyword id="KW-0067">ATP-binding</keyword>
<keyword id="KW-0963">Cytoplasm</keyword>
<keyword id="KW-0418">Kinase</keyword>
<keyword id="KW-0547">Nucleotide-binding</keyword>
<keyword id="KW-0641">Proline biosynthesis</keyword>
<keyword id="KW-0808">Transferase</keyword>
<protein>
    <recommendedName>
        <fullName evidence="1">Glutamate 5-kinase</fullName>
        <ecNumber evidence="1">2.7.2.11</ecNumber>
    </recommendedName>
    <alternativeName>
        <fullName evidence="1">Gamma-glutamyl kinase</fullName>
        <shortName evidence="1">GK</shortName>
    </alternativeName>
</protein>
<evidence type="ECO:0000255" key="1">
    <source>
        <dbReference type="HAMAP-Rule" id="MF_00456"/>
    </source>
</evidence>
<feature type="chain" id="PRO_0000252994" description="Glutamate 5-kinase">
    <location>
        <begin position="1"/>
        <end position="366"/>
    </location>
</feature>
<feature type="domain" description="PUA" evidence="1">
    <location>
        <begin position="278"/>
        <end position="352"/>
    </location>
</feature>
<feature type="binding site" evidence="1">
    <location>
        <position position="17"/>
    </location>
    <ligand>
        <name>ATP</name>
        <dbReference type="ChEBI" id="CHEBI:30616"/>
    </ligand>
</feature>
<feature type="binding site" evidence="1">
    <location>
        <position position="57"/>
    </location>
    <ligand>
        <name>substrate</name>
    </ligand>
</feature>
<feature type="binding site" evidence="1">
    <location>
        <position position="144"/>
    </location>
    <ligand>
        <name>substrate</name>
    </ligand>
</feature>
<feature type="binding site" evidence="1">
    <location>
        <position position="156"/>
    </location>
    <ligand>
        <name>substrate</name>
    </ligand>
</feature>
<feature type="binding site" evidence="1">
    <location>
        <begin position="176"/>
        <end position="177"/>
    </location>
    <ligand>
        <name>ATP</name>
        <dbReference type="ChEBI" id="CHEBI:30616"/>
    </ligand>
</feature>
<feature type="binding site" evidence="1">
    <location>
        <begin position="216"/>
        <end position="222"/>
    </location>
    <ligand>
        <name>ATP</name>
        <dbReference type="ChEBI" id="CHEBI:30616"/>
    </ligand>
</feature>